<feature type="chain" id="PRO_0000164669" description="Voltage-dependent calcium channel gamma-1 subunit">
    <location>
        <begin position="1"/>
        <end position="222"/>
    </location>
</feature>
<feature type="topological domain" description="Cytoplasmic" evidence="6">
    <location>
        <begin position="1"/>
        <end position="10"/>
    </location>
</feature>
<feature type="transmembrane region" description="Helical" evidence="1">
    <location>
        <begin position="11"/>
        <end position="29"/>
    </location>
</feature>
<feature type="topological domain" description="Extracellular" evidence="6">
    <location>
        <begin position="30"/>
        <end position="108"/>
    </location>
</feature>
<feature type="transmembrane region" description="Helical" evidence="1">
    <location>
        <begin position="109"/>
        <end position="129"/>
    </location>
</feature>
<feature type="topological domain" description="Cytoplasmic" evidence="6">
    <location>
        <begin position="130"/>
        <end position="134"/>
    </location>
</feature>
<feature type="transmembrane region" description="Helical" evidence="1">
    <location>
        <begin position="135"/>
        <end position="155"/>
    </location>
</feature>
<feature type="topological domain" description="Extracellular" evidence="6">
    <location>
        <begin position="156"/>
        <end position="179"/>
    </location>
</feature>
<feature type="transmembrane region" description="Helical" evidence="1">
    <location>
        <begin position="180"/>
        <end position="204"/>
    </location>
</feature>
<feature type="topological domain" description="Cytoplasmic" evidence="6">
    <location>
        <begin position="205"/>
        <end position="222"/>
    </location>
</feature>
<feature type="glycosylation site" description="N-linked (GlcNAc...) asparagine" evidence="2">
    <location>
        <position position="43"/>
    </location>
</feature>
<feature type="glycosylation site" description="N-linked (GlcNAc...) asparagine" evidence="2">
    <location>
        <position position="79"/>
    </location>
</feature>
<feature type="disulfide bond" evidence="1">
    <location>
        <begin position="57"/>
        <end position="80"/>
    </location>
</feature>
<feature type="sequence variant" id="VAR_012063" description="In dbSNP:rs1799938.">
    <original>G</original>
    <variation>S</variation>
    <location>
        <position position="196"/>
    </location>
</feature>
<sequence>MSQTKMLKVRVTLFCILAGIVLAMTAVVTDHWAVLSPHMEHHNTTCEAAHFGLWRICTKRIPMDDSKTCGPITLPGEKNCSYFRHFNPGESSEIFEFTTQKEYSISAAAIAIFSLGFIILGSLCVLLSLGKKRDYLLRPASMFYAFAGLCILVSVEVMRQSVKRMIDSEDTVWIEYYYSWSFACACAAFILLFLGGLALLLFSLPRMPRNPWESCMDAEPEH</sequence>
<gene>
    <name type="primary">CACNG1</name>
    <name evidence="4 5" type="synonym">CACNLG</name>
</gene>
<protein>
    <recommendedName>
        <fullName>Voltage-dependent calcium channel gamma-1 subunit</fullName>
    </recommendedName>
    <alternativeName>
        <fullName>Dihydropyridine-sensitive L-type, skeletal muscle calcium channel subunit gamma</fullName>
    </alternativeName>
</protein>
<organism>
    <name type="scientific">Homo sapiens</name>
    <name type="common">Human</name>
    <dbReference type="NCBI Taxonomy" id="9606"/>
    <lineage>
        <taxon>Eukaryota</taxon>
        <taxon>Metazoa</taxon>
        <taxon>Chordata</taxon>
        <taxon>Craniata</taxon>
        <taxon>Vertebrata</taxon>
        <taxon>Euteleostomi</taxon>
        <taxon>Mammalia</taxon>
        <taxon>Eutheria</taxon>
        <taxon>Euarchontoglires</taxon>
        <taxon>Primates</taxon>
        <taxon>Haplorrhini</taxon>
        <taxon>Catarrhini</taxon>
        <taxon>Hominidae</taxon>
        <taxon>Homo</taxon>
    </lineage>
</organism>
<reference key="1">
    <citation type="journal article" date="1993" name="J. Biol. Chem.">
        <title>Molecular characterization of the gene encoding the gamma subunit of the human skeletal muscle 1,4-dihydropyridine-sensitive Ca2+ channel (CACNLG), cDNA sequence, gene structure, and chromosomal location.</title>
        <authorList>
            <person name="Powers P.A."/>
            <person name="Liu S."/>
            <person name="Hogan K."/>
            <person name="Gregg R.G."/>
        </authorList>
    </citation>
    <scope>NUCLEOTIDE SEQUENCE [MRNA]</scope>
    <scope>TISSUE SPECIFICITY</scope>
    <source>
        <tissue>Fetal skeletal muscle</tissue>
    </source>
</reference>
<reference key="2">
    <citation type="journal article" date="2004" name="Nat. Genet.">
        <title>Complete sequencing and characterization of 21,243 full-length human cDNAs.</title>
        <authorList>
            <person name="Ota T."/>
            <person name="Suzuki Y."/>
            <person name="Nishikawa T."/>
            <person name="Otsuki T."/>
            <person name="Sugiyama T."/>
            <person name="Irie R."/>
            <person name="Wakamatsu A."/>
            <person name="Hayashi K."/>
            <person name="Sato H."/>
            <person name="Nagai K."/>
            <person name="Kimura K."/>
            <person name="Makita H."/>
            <person name="Sekine M."/>
            <person name="Obayashi M."/>
            <person name="Nishi T."/>
            <person name="Shibahara T."/>
            <person name="Tanaka T."/>
            <person name="Ishii S."/>
            <person name="Yamamoto J."/>
            <person name="Saito K."/>
            <person name="Kawai Y."/>
            <person name="Isono Y."/>
            <person name="Nakamura Y."/>
            <person name="Nagahari K."/>
            <person name="Murakami K."/>
            <person name="Yasuda T."/>
            <person name="Iwayanagi T."/>
            <person name="Wagatsuma M."/>
            <person name="Shiratori A."/>
            <person name="Sudo H."/>
            <person name="Hosoiri T."/>
            <person name="Kaku Y."/>
            <person name="Kodaira H."/>
            <person name="Kondo H."/>
            <person name="Sugawara M."/>
            <person name="Takahashi M."/>
            <person name="Kanda K."/>
            <person name="Yokoi T."/>
            <person name="Furuya T."/>
            <person name="Kikkawa E."/>
            <person name="Omura Y."/>
            <person name="Abe K."/>
            <person name="Kamihara K."/>
            <person name="Katsuta N."/>
            <person name="Sato K."/>
            <person name="Tanikawa M."/>
            <person name="Yamazaki M."/>
            <person name="Ninomiya K."/>
            <person name="Ishibashi T."/>
            <person name="Yamashita H."/>
            <person name="Murakawa K."/>
            <person name="Fujimori K."/>
            <person name="Tanai H."/>
            <person name="Kimata M."/>
            <person name="Watanabe M."/>
            <person name="Hiraoka S."/>
            <person name="Chiba Y."/>
            <person name="Ishida S."/>
            <person name="Ono Y."/>
            <person name="Takiguchi S."/>
            <person name="Watanabe S."/>
            <person name="Yosida M."/>
            <person name="Hotuta T."/>
            <person name="Kusano J."/>
            <person name="Kanehori K."/>
            <person name="Takahashi-Fujii A."/>
            <person name="Hara H."/>
            <person name="Tanase T.-O."/>
            <person name="Nomura Y."/>
            <person name="Togiya S."/>
            <person name="Komai F."/>
            <person name="Hara R."/>
            <person name="Takeuchi K."/>
            <person name="Arita M."/>
            <person name="Imose N."/>
            <person name="Musashino K."/>
            <person name="Yuuki H."/>
            <person name="Oshima A."/>
            <person name="Sasaki N."/>
            <person name="Aotsuka S."/>
            <person name="Yoshikawa Y."/>
            <person name="Matsunawa H."/>
            <person name="Ichihara T."/>
            <person name="Shiohata N."/>
            <person name="Sano S."/>
            <person name="Moriya S."/>
            <person name="Momiyama H."/>
            <person name="Satoh N."/>
            <person name="Takami S."/>
            <person name="Terashima Y."/>
            <person name="Suzuki O."/>
            <person name="Nakagawa S."/>
            <person name="Senoh A."/>
            <person name="Mizoguchi H."/>
            <person name="Goto Y."/>
            <person name="Shimizu F."/>
            <person name="Wakebe H."/>
            <person name="Hishigaki H."/>
            <person name="Watanabe T."/>
            <person name="Sugiyama A."/>
            <person name="Takemoto M."/>
            <person name="Kawakami B."/>
            <person name="Yamazaki M."/>
            <person name="Watanabe K."/>
            <person name="Kumagai A."/>
            <person name="Itakura S."/>
            <person name="Fukuzumi Y."/>
            <person name="Fujimori Y."/>
            <person name="Komiyama M."/>
            <person name="Tashiro H."/>
            <person name="Tanigami A."/>
            <person name="Fujiwara T."/>
            <person name="Ono T."/>
            <person name="Yamada K."/>
            <person name="Fujii Y."/>
            <person name="Ozaki K."/>
            <person name="Hirao M."/>
            <person name="Ohmori Y."/>
            <person name="Kawabata A."/>
            <person name="Hikiji T."/>
            <person name="Kobatake N."/>
            <person name="Inagaki H."/>
            <person name="Ikema Y."/>
            <person name="Okamoto S."/>
            <person name="Okitani R."/>
            <person name="Kawakami T."/>
            <person name="Noguchi S."/>
            <person name="Itoh T."/>
            <person name="Shigeta K."/>
            <person name="Senba T."/>
            <person name="Matsumura K."/>
            <person name="Nakajima Y."/>
            <person name="Mizuno T."/>
            <person name="Morinaga M."/>
            <person name="Sasaki M."/>
            <person name="Togashi T."/>
            <person name="Oyama M."/>
            <person name="Hata H."/>
            <person name="Watanabe M."/>
            <person name="Komatsu T."/>
            <person name="Mizushima-Sugano J."/>
            <person name="Satoh T."/>
            <person name="Shirai Y."/>
            <person name="Takahashi Y."/>
            <person name="Nakagawa K."/>
            <person name="Okumura K."/>
            <person name="Nagase T."/>
            <person name="Nomura N."/>
            <person name="Kikuchi H."/>
            <person name="Masuho Y."/>
            <person name="Yamashita R."/>
            <person name="Nakai K."/>
            <person name="Yada T."/>
            <person name="Nakamura Y."/>
            <person name="Ohara O."/>
            <person name="Isogai T."/>
            <person name="Sugano S."/>
        </authorList>
    </citation>
    <scope>NUCLEOTIDE SEQUENCE [LARGE SCALE MRNA]</scope>
    <source>
        <tissue>Skeletal muscle</tissue>
    </source>
</reference>
<reference key="3">
    <citation type="submission" date="2005-07" db="EMBL/GenBank/DDBJ databases">
        <authorList>
            <person name="Mural R.J."/>
            <person name="Istrail S."/>
            <person name="Sutton G.G."/>
            <person name="Florea L."/>
            <person name="Halpern A.L."/>
            <person name="Mobarry C.M."/>
            <person name="Lippert R."/>
            <person name="Walenz B."/>
            <person name="Shatkay H."/>
            <person name="Dew I."/>
            <person name="Miller J.R."/>
            <person name="Flanigan M.J."/>
            <person name="Edwards N.J."/>
            <person name="Bolanos R."/>
            <person name="Fasulo D."/>
            <person name="Halldorsson B.V."/>
            <person name="Hannenhalli S."/>
            <person name="Turner R."/>
            <person name="Yooseph S."/>
            <person name="Lu F."/>
            <person name="Nusskern D.R."/>
            <person name="Shue B.C."/>
            <person name="Zheng X.H."/>
            <person name="Zhong F."/>
            <person name="Delcher A.L."/>
            <person name="Huson D.H."/>
            <person name="Kravitz S.A."/>
            <person name="Mouchard L."/>
            <person name="Reinert K."/>
            <person name="Remington K.A."/>
            <person name="Clark A.G."/>
            <person name="Waterman M.S."/>
            <person name="Eichler E.E."/>
            <person name="Adams M.D."/>
            <person name="Hunkapiller M.W."/>
            <person name="Myers E.W."/>
            <person name="Venter J.C."/>
        </authorList>
    </citation>
    <scope>NUCLEOTIDE SEQUENCE [LARGE SCALE GENOMIC DNA]</scope>
</reference>
<reference key="4">
    <citation type="journal article" date="2004" name="Genome Res.">
        <title>The status, quality, and expansion of the NIH full-length cDNA project: the Mammalian Gene Collection (MGC).</title>
        <authorList>
            <consortium name="The MGC Project Team"/>
        </authorList>
    </citation>
    <scope>NUCLEOTIDE SEQUENCE [LARGE SCALE MRNA]</scope>
</reference>
<reference key="5">
    <citation type="journal article" date="1993" name="Cytogenet. Cell Genet.">
        <title>Localization of the gamma-subunit of the skeletal muscle L-type voltage-dependent calcium channel gene (CACNLG) to human chromosome band 17q24 by in situ hybridization and identification of a polymorphic repetitive DNA sequence at the gene locus.</title>
        <authorList>
            <person name="Iles D.E."/>
            <person name="Segers B."/>
            <person name="Weghuis D.O."/>
            <person name="Suikerbuijk R."/>
            <person name="Wieringa B."/>
        </authorList>
    </citation>
    <scope>NUCLEOTIDE SEQUENCE [GENOMIC DNA] OF 102-147 AND 174-222</scope>
</reference>
<proteinExistence type="evidence at protein level"/>
<accession>Q06432</accession>
<accession>B2R9N3</accession>
<accession>Q14D59</accession>
<name>CCG1_HUMAN</name>
<keyword id="KW-0106">Calcium</keyword>
<keyword id="KW-0107">Calcium channel</keyword>
<keyword id="KW-0109">Calcium transport</keyword>
<keyword id="KW-1003">Cell membrane</keyword>
<keyword id="KW-1015">Disulfide bond</keyword>
<keyword id="KW-0325">Glycoprotein</keyword>
<keyword id="KW-0407">Ion channel</keyword>
<keyword id="KW-0406">Ion transport</keyword>
<keyword id="KW-0472">Membrane</keyword>
<keyword id="KW-1267">Proteomics identification</keyword>
<keyword id="KW-1185">Reference proteome</keyword>
<keyword id="KW-0812">Transmembrane</keyword>
<keyword id="KW-1133">Transmembrane helix</keyword>
<keyword id="KW-0813">Transport</keyword>
<keyword id="KW-0851">Voltage-gated channel</keyword>
<evidence type="ECO:0000250" key="1">
    <source>
        <dbReference type="UniProtKB" id="P19518"/>
    </source>
</evidence>
<evidence type="ECO:0000255" key="2"/>
<evidence type="ECO:0000269" key="3">
    <source>
    </source>
</evidence>
<evidence type="ECO:0000303" key="4">
    <source>
    </source>
</evidence>
<evidence type="ECO:0000303" key="5">
    <source>
    </source>
</evidence>
<evidence type="ECO:0000305" key="6"/>
<dbReference type="EMBL" id="L07738">
    <property type="protein sequence ID" value="AAA51904.1"/>
    <property type="molecule type" value="mRNA"/>
</dbReference>
<dbReference type="EMBL" id="AK313852">
    <property type="protein sequence ID" value="BAG36580.1"/>
    <property type="molecule type" value="mRNA"/>
</dbReference>
<dbReference type="EMBL" id="CH471099">
    <property type="protein sequence ID" value="EAW89022.1"/>
    <property type="molecule type" value="Genomic_DNA"/>
</dbReference>
<dbReference type="EMBL" id="BC069493">
    <property type="protein sequence ID" value="AAH69493.1"/>
    <property type="molecule type" value="mRNA"/>
</dbReference>
<dbReference type="EMBL" id="BC113486">
    <property type="protein sequence ID" value="AAI13487.1"/>
    <property type="molecule type" value="mRNA"/>
</dbReference>
<dbReference type="EMBL" id="BC113492">
    <property type="protein sequence ID" value="AAI13493.1"/>
    <property type="molecule type" value="mRNA"/>
</dbReference>
<dbReference type="EMBL" id="Z19603">
    <property type="protein sequence ID" value="CAA79671.1"/>
    <property type="molecule type" value="Genomic_DNA"/>
</dbReference>
<dbReference type="EMBL" id="Z19587">
    <property type="protein sequence ID" value="CAB62573.1"/>
    <property type="status" value="ALT_SEQ"/>
    <property type="molecule type" value="Genomic_DNA"/>
</dbReference>
<dbReference type="CCDS" id="CCDS11668.1"/>
<dbReference type="PIR" id="A46658">
    <property type="entry name" value="A46658"/>
</dbReference>
<dbReference type="RefSeq" id="NP_000718.1">
    <property type="nucleotide sequence ID" value="NM_000727.4"/>
</dbReference>
<dbReference type="SMR" id="Q06432"/>
<dbReference type="BioGRID" id="107240">
    <property type="interactions" value="110"/>
</dbReference>
<dbReference type="ComplexPortal" id="CPX-3192">
    <property type="entry name" value="Cav1.1 voltage-gated calcium channel complex, CACNA2D1-CACNB1-CACNG1 variant"/>
</dbReference>
<dbReference type="ComplexPortal" id="CPX-8699">
    <property type="entry name" value="Cav1.1 voltage-gated calcium channel complex, CACNA2D1-CACNB2-CACNG1 variant"/>
</dbReference>
<dbReference type="ComplexPortal" id="CPX-8725">
    <property type="entry name" value="Cav1.1 voltage-gated calcium channel complex, CACNA2D1-CACNB3-CACNG1 variant"/>
</dbReference>
<dbReference type="ComplexPortal" id="CPX-8726">
    <property type="entry name" value="Cav1.1 voltage-gated calcium channel complex, CACNA2D1-CACNB4-CACNG1 variant"/>
</dbReference>
<dbReference type="ComplexPortal" id="CPX-8740">
    <property type="entry name" value="Cav1.1 voltage-gated calcium channel complex, CACNA2D2-CACNB1-CACNG1 variant"/>
</dbReference>
<dbReference type="ComplexPortal" id="CPX-8741">
    <property type="entry name" value="Cav1.1 voltage-gated calcium channel complex, CACNA2D2-CACNB2-CACNG1 variant"/>
</dbReference>
<dbReference type="ComplexPortal" id="CPX-8742">
    <property type="entry name" value="Cav1.1 voltage-gated calcium channel complex, CACNA2D2-CACNB3-CACNG1 variant"/>
</dbReference>
<dbReference type="ComplexPortal" id="CPX-8743">
    <property type="entry name" value="Cav1.1 voltage-gated calcium channel complex, CACNA2D2-CACNB4-CACNG1 variant"/>
</dbReference>
<dbReference type="ComplexPortal" id="CPX-8762">
    <property type="entry name" value="Cav1.1 voltage-gated calcium channel complex, CACNA2D3-CACNB1-CACNG1 variant"/>
</dbReference>
<dbReference type="ComplexPortal" id="CPX-8763">
    <property type="entry name" value="Cav1.1 voltage-gated calcium channel complex, CACNA2D3-CACNB2-CACNG1 variant"/>
</dbReference>
<dbReference type="ComplexPortal" id="CPX-8764">
    <property type="entry name" value="Cav1.1 voltage-gated calcium channel complex, CACNA2D3-CACNB3-CACNG1 variant"/>
</dbReference>
<dbReference type="ComplexPortal" id="CPX-8768">
    <property type="entry name" value="Cav1.1 voltage-gated calcium channel complex, CACNA2D3-CACNB4-CACNG1 variant"/>
</dbReference>
<dbReference type="ComplexPortal" id="CPX-8769">
    <property type="entry name" value="Cav1.1 voltage-gated calcium channel complex, CACNA2D4-CACNB1-CACNG1 variant"/>
</dbReference>
<dbReference type="ComplexPortal" id="CPX-8771">
    <property type="entry name" value="Cav1.1 voltage-gated calcium channel complex, CACNA2D4-CACNB2-CACNG1 variant"/>
</dbReference>
<dbReference type="ComplexPortal" id="CPX-8772">
    <property type="entry name" value="Cav1.1 voltage-gated calcium channel complex, CACNA2D4-CACNB3-CACNG1 variant"/>
</dbReference>
<dbReference type="ComplexPortal" id="CPX-8773">
    <property type="entry name" value="Cav1.1 voltage-gated calcium channel complex, CACNA2D4-CACNB4-CACNG1 variant"/>
</dbReference>
<dbReference type="FunCoup" id="Q06432">
    <property type="interactions" value="630"/>
</dbReference>
<dbReference type="IntAct" id="Q06432">
    <property type="interactions" value="44"/>
</dbReference>
<dbReference type="STRING" id="9606.ENSP00000226021"/>
<dbReference type="BindingDB" id="Q06432"/>
<dbReference type="ChEMBL" id="CHEMBL2363032"/>
<dbReference type="DrugBank" id="DB13746">
    <property type="generic name" value="Bioallethrin"/>
</dbReference>
<dbReference type="DrugBank" id="DB11148">
    <property type="generic name" value="Butamben"/>
</dbReference>
<dbReference type="DrugBank" id="DB00343">
    <property type="generic name" value="Diltiazem"/>
</dbReference>
<dbReference type="DrugBank" id="DB09235">
    <property type="generic name" value="Efonidipine"/>
</dbReference>
<dbReference type="DrugBank" id="DB00228">
    <property type="generic name" value="Enflurane"/>
</dbReference>
<dbReference type="DrugBank" id="DB00153">
    <property type="generic name" value="Ergocalciferol"/>
</dbReference>
<dbReference type="DrugBank" id="DB00898">
    <property type="generic name" value="Ethanol"/>
</dbReference>
<dbReference type="DrugBank" id="DB04842">
    <property type="generic name" value="Fluspirilene"/>
</dbReference>
<dbReference type="DrugBank" id="DB00308">
    <property type="generic name" value="Ibutilide"/>
</dbReference>
<dbReference type="DrugBank" id="DB00528">
    <property type="generic name" value="Lercanidipine"/>
</dbReference>
<dbReference type="DrugBank" id="DB00622">
    <property type="generic name" value="Nicardipine"/>
</dbReference>
<dbReference type="DrugBank" id="DB00661">
    <property type="generic name" value="Verapamil"/>
</dbReference>
<dbReference type="DrugCentral" id="Q06432"/>
<dbReference type="TCDB" id="8.A.16.1.1">
    <property type="family name" value="the ca(+) channel auxiliary subunit Gama1-Gama8 (ccaGama) family"/>
</dbReference>
<dbReference type="GlyCosmos" id="Q06432">
    <property type="glycosylation" value="2 sites, No reported glycans"/>
</dbReference>
<dbReference type="GlyGen" id="Q06432">
    <property type="glycosylation" value="2 sites"/>
</dbReference>
<dbReference type="iPTMnet" id="Q06432"/>
<dbReference type="PhosphoSitePlus" id="Q06432"/>
<dbReference type="BioMuta" id="CACNG1"/>
<dbReference type="DMDM" id="1168946"/>
<dbReference type="MassIVE" id="Q06432"/>
<dbReference type="PaxDb" id="9606-ENSP00000226021"/>
<dbReference type="PeptideAtlas" id="Q06432"/>
<dbReference type="ProteomicsDB" id="58446"/>
<dbReference type="Antibodypedia" id="19201">
    <property type="antibodies" value="189 antibodies from 28 providers"/>
</dbReference>
<dbReference type="DNASU" id="786"/>
<dbReference type="Ensembl" id="ENST00000226021.5">
    <property type="protein sequence ID" value="ENSP00000226021.3"/>
    <property type="gene ID" value="ENSG00000108878.5"/>
</dbReference>
<dbReference type="GeneID" id="786"/>
<dbReference type="KEGG" id="hsa:786"/>
<dbReference type="MANE-Select" id="ENST00000226021.5">
    <property type="protein sequence ID" value="ENSP00000226021.3"/>
    <property type="RefSeq nucleotide sequence ID" value="NM_000727.4"/>
    <property type="RefSeq protein sequence ID" value="NP_000718.1"/>
</dbReference>
<dbReference type="UCSC" id="uc002jfu.4">
    <property type="organism name" value="human"/>
</dbReference>
<dbReference type="AGR" id="HGNC:1405"/>
<dbReference type="CTD" id="786"/>
<dbReference type="DisGeNET" id="786"/>
<dbReference type="GeneCards" id="CACNG1"/>
<dbReference type="HGNC" id="HGNC:1405">
    <property type="gene designation" value="CACNG1"/>
</dbReference>
<dbReference type="HPA" id="ENSG00000108878">
    <property type="expression patterns" value="Group enriched (skeletal muscle, tongue)"/>
</dbReference>
<dbReference type="MIM" id="114209">
    <property type="type" value="gene"/>
</dbReference>
<dbReference type="neXtProt" id="NX_Q06432"/>
<dbReference type="OpenTargets" id="ENSG00000108878"/>
<dbReference type="PharmGKB" id="PA26015"/>
<dbReference type="VEuPathDB" id="HostDB:ENSG00000108878"/>
<dbReference type="eggNOG" id="ENOG502QT5N">
    <property type="taxonomic scope" value="Eukaryota"/>
</dbReference>
<dbReference type="GeneTree" id="ENSGT00390000007786"/>
<dbReference type="HOGENOM" id="CLU_093876_0_0_1"/>
<dbReference type="InParanoid" id="Q06432"/>
<dbReference type="OMA" id="CIKRIFM"/>
<dbReference type="OrthoDB" id="9937541at2759"/>
<dbReference type="PAN-GO" id="Q06432">
    <property type="GO annotations" value="3 GO annotations based on evolutionary models"/>
</dbReference>
<dbReference type="PhylomeDB" id="Q06432"/>
<dbReference type="TreeFam" id="TF331651"/>
<dbReference type="PathwayCommons" id="Q06432"/>
<dbReference type="SignaLink" id="Q06432"/>
<dbReference type="BioGRID-ORCS" id="786">
    <property type="hits" value="25 hits in 1152 CRISPR screens"/>
</dbReference>
<dbReference type="GeneWiki" id="CACNG1"/>
<dbReference type="GenomeRNAi" id="786"/>
<dbReference type="Pharos" id="Q06432">
    <property type="development level" value="Tbio"/>
</dbReference>
<dbReference type="PRO" id="PR:Q06432"/>
<dbReference type="Proteomes" id="UP000005640">
    <property type="component" value="Chromosome 17"/>
</dbReference>
<dbReference type="RNAct" id="Q06432">
    <property type="molecule type" value="protein"/>
</dbReference>
<dbReference type="Bgee" id="ENSG00000108878">
    <property type="expression patterns" value="Expressed in gastrocnemius and 100 other cell types or tissues"/>
</dbReference>
<dbReference type="GO" id="GO:1990454">
    <property type="term" value="C:L-type voltage-gated calcium channel complex"/>
    <property type="evidence" value="ECO:0000250"/>
    <property type="project" value="UniProtKB"/>
</dbReference>
<dbReference type="GO" id="GO:0005886">
    <property type="term" value="C:plasma membrane"/>
    <property type="evidence" value="ECO:0000250"/>
    <property type="project" value="UniProtKB"/>
</dbReference>
<dbReference type="GO" id="GO:0042383">
    <property type="term" value="C:sarcolemma"/>
    <property type="evidence" value="ECO:0000250"/>
    <property type="project" value="UniProtKB"/>
</dbReference>
<dbReference type="GO" id="GO:0030315">
    <property type="term" value="C:T-tubule"/>
    <property type="evidence" value="ECO:0000250"/>
    <property type="project" value="UniProtKB"/>
</dbReference>
<dbReference type="GO" id="GO:0005246">
    <property type="term" value="F:calcium channel regulator activity"/>
    <property type="evidence" value="ECO:0000250"/>
    <property type="project" value="UniProtKB"/>
</dbReference>
<dbReference type="GO" id="GO:0005245">
    <property type="term" value="F:voltage-gated calcium channel activity"/>
    <property type="evidence" value="ECO:0007669"/>
    <property type="project" value="Ensembl"/>
</dbReference>
<dbReference type="GO" id="GO:0070588">
    <property type="term" value="P:calcium ion transmembrane transport"/>
    <property type="evidence" value="ECO:0000303"/>
    <property type="project" value="ComplexPortal"/>
</dbReference>
<dbReference type="GO" id="GO:0051649">
    <property type="term" value="P:establishment of localization in cell"/>
    <property type="evidence" value="ECO:0007669"/>
    <property type="project" value="Ensembl"/>
</dbReference>
<dbReference type="GO" id="GO:0045933">
    <property type="term" value="P:positive regulation of muscle contraction"/>
    <property type="evidence" value="ECO:0000303"/>
    <property type="project" value="ComplexPortal"/>
</dbReference>
<dbReference type="GO" id="GO:1902514">
    <property type="term" value="P:regulation of calcium ion transmembrane transport via high voltage-gated calcium channel"/>
    <property type="evidence" value="ECO:0000250"/>
    <property type="project" value="UniProtKB"/>
</dbReference>
<dbReference type="GO" id="GO:0070296">
    <property type="term" value="P:sarcoplasmic reticulum calcium ion transport"/>
    <property type="evidence" value="ECO:0007669"/>
    <property type="project" value="Ensembl"/>
</dbReference>
<dbReference type="FunFam" id="1.20.140.150:FF:000031">
    <property type="entry name" value="Voltage-dependent calcium channel gamma-1 subunit"/>
    <property type="match status" value="1"/>
</dbReference>
<dbReference type="Gene3D" id="1.20.140.150">
    <property type="match status" value="1"/>
</dbReference>
<dbReference type="InterPro" id="IPR004031">
    <property type="entry name" value="PMP22/EMP/MP20/Claudin"/>
</dbReference>
<dbReference type="InterPro" id="IPR005421">
    <property type="entry name" value="VDCC_g1su"/>
</dbReference>
<dbReference type="InterPro" id="IPR008368">
    <property type="entry name" value="VDCC_gsu"/>
</dbReference>
<dbReference type="PANTHER" id="PTHR15025:SF1">
    <property type="entry name" value="VOLTAGE-DEPENDENT CALCIUM CHANNEL GAMMA-1 SUBUNIT"/>
    <property type="match status" value="1"/>
</dbReference>
<dbReference type="PANTHER" id="PTHR15025">
    <property type="entry name" value="VOLTAGE-DEPENDENT CALCIUM CHANNEL GAMMA-1 SUBUNIT-RELATED"/>
    <property type="match status" value="1"/>
</dbReference>
<dbReference type="Pfam" id="PF13903">
    <property type="entry name" value="Claudin_2"/>
    <property type="match status" value="1"/>
</dbReference>
<dbReference type="PRINTS" id="PR01792">
    <property type="entry name" value="VDCCGAMMA"/>
</dbReference>
<dbReference type="PRINTS" id="PR01601">
    <property type="entry name" value="VDCCGAMMA1"/>
</dbReference>
<comment type="function">
    <text evidence="1">Regulatory subunit of the voltage-gated calcium channel that gives rise to L-type calcium currents in skeletal muscle. Regulates channel inactivation kinetics.</text>
</comment>
<comment type="subunit">
    <text evidence="1">Component of a calcium channel complex consisting of a pore-forming alpha subunit (CACNA1S) and the ancillary subunits CACNB1 or CACNB2, CACNG1 and CACNA2D1. The channel complex contains alpha, beta, gamma and delta subunits in a 1:1:1:1 ratio, i.e. it contains either CACNB1 or CACNB2.</text>
</comment>
<comment type="interaction">
    <interactant intactId="EBI-9686780">
        <id>Q06432</id>
    </interactant>
    <interactant intactId="EBI-700794">
        <id>Q13323</id>
        <label>BIK</label>
    </interactant>
    <organismsDiffer>false</organismsDiffer>
    <experiments>3</experiments>
</comment>
<comment type="interaction">
    <interactant intactId="EBI-9686780">
        <id>Q06432</id>
    </interactant>
    <interactant intactId="EBI-18013275">
        <id>Q7Z7G2</id>
        <label>CPLX4</label>
    </interactant>
    <organismsDiffer>false</organismsDiffer>
    <experiments>3</experiments>
</comment>
<comment type="interaction">
    <interactant intactId="EBI-9686780">
        <id>Q06432</id>
    </interactant>
    <interactant intactId="EBI-17973325">
        <id>P60508</id>
        <label>ERVFRD-1</label>
    </interactant>
    <organismsDiffer>false</organismsDiffer>
    <experiments>3</experiments>
</comment>
<comment type="interaction">
    <interactant intactId="EBI-9686780">
        <id>Q06432</id>
    </interactant>
    <interactant intactId="EBI-2833872">
        <id>O15552</id>
        <label>FFAR2</label>
    </interactant>
    <organismsDiffer>false</organismsDiffer>
    <experiments>3</experiments>
</comment>
<comment type="interaction">
    <interactant intactId="EBI-9686780">
        <id>Q06432</id>
    </interactant>
    <interactant intactId="EBI-12142257">
        <id>Q8TBE3</id>
        <label>FNDC9</label>
    </interactant>
    <organismsDiffer>false</organismsDiffer>
    <experiments>3</experiments>
</comment>
<comment type="interaction">
    <interactant intactId="EBI-9686780">
        <id>Q06432</id>
    </interactant>
    <interactant intactId="EBI-9304251">
        <id>Q05329</id>
        <label>GAD2</label>
    </interactant>
    <organismsDiffer>false</organismsDiffer>
    <experiments>3</experiments>
</comment>
<comment type="interaction">
    <interactant intactId="EBI-9686780">
        <id>Q06432</id>
    </interactant>
    <interactant intactId="EBI-11721746">
        <id>Q8TED1</id>
        <label>GPX8</label>
    </interactant>
    <organismsDiffer>false</organismsDiffer>
    <experiments>3</experiments>
</comment>
<comment type="interaction">
    <interactant intactId="EBI-9686780">
        <id>Q06432</id>
    </interactant>
    <interactant intactId="EBI-18053395">
        <id>Q7Z5P4</id>
        <label>HSD17B13</label>
    </interactant>
    <organismsDiffer>false</organismsDiffer>
    <experiments>3</experiments>
</comment>
<comment type="interaction">
    <interactant intactId="EBI-9686780">
        <id>Q06432</id>
    </interactant>
    <interactant intactId="EBI-724754">
        <id>O14880</id>
        <label>MGST3</label>
    </interactant>
    <organismsDiffer>false</organismsDiffer>
    <experiments>3</experiments>
</comment>
<comment type="interaction">
    <interactant intactId="EBI-9686780">
        <id>Q06432</id>
    </interactant>
    <interactant intactId="EBI-17263240">
        <id>P15941-11</id>
        <label>MUC1</label>
    </interactant>
    <organismsDiffer>false</organismsDiffer>
    <experiments>3</experiments>
</comment>
<comment type="interaction">
    <interactant intactId="EBI-9686780">
        <id>Q06432</id>
    </interactant>
    <interactant intactId="EBI-12382569">
        <id>Q2M2E3</id>
        <label>ODF4</label>
    </interactant>
    <organismsDiffer>false</organismsDiffer>
    <experiments>3</experiments>
</comment>
<comment type="interaction">
    <interactant intactId="EBI-9686780">
        <id>Q06432</id>
    </interactant>
    <interactant intactId="EBI-7545592">
        <id>Q9H6H4</id>
        <label>REEP4</label>
    </interactant>
    <organismsDiffer>false</organismsDiffer>
    <experiments>3</experiments>
</comment>
<comment type="interaction">
    <interactant intactId="EBI-9686780">
        <id>Q06432</id>
    </interactant>
    <interactant intactId="EBI-726691">
        <id>Q8WY91</id>
        <label>THAP4</label>
    </interactant>
    <organismsDiffer>false</organismsDiffer>
    <experiments>3</experiments>
</comment>
<comment type="interaction">
    <interactant intactId="EBI-9686780">
        <id>Q06432</id>
    </interactant>
    <interactant intactId="EBI-12947623">
        <id>Q96MV1</id>
        <label>TLCD4</label>
    </interactant>
    <organismsDiffer>false</organismsDiffer>
    <experiments>3</experiments>
</comment>
<comment type="interaction">
    <interactant intactId="EBI-9686780">
        <id>Q06432</id>
    </interactant>
    <interactant intactId="EBI-3923061">
        <id>Q96B21</id>
        <label>TMEM45B</label>
    </interactant>
    <organismsDiffer>false</organismsDiffer>
    <experiments>3</experiments>
</comment>
<comment type="interaction">
    <interactant intactId="EBI-9686780">
        <id>Q06432</id>
    </interactant>
    <interactant intactId="EBI-1059156">
        <id>Q9P0L0</id>
        <label>VAPA</label>
    </interactant>
    <organismsDiffer>false</organismsDiffer>
    <experiments>3</experiments>
</comment>
<comment type="interaction">
    <interactant intactId="EBI-9686780">
        <id>Q06432</id>
    </interactant>
    <interactant intactId="EBI-10174961">
        <id>A8KA83</id>
    </interactant>
    <organismsDiffer>false</organismsDiffer>
    <experiments>3</experiments>
</comment>
<comment type="subcellular location">
    <subcellularLocation>
        <location evidence="1">Cell membrane</location>
        <location evidence="1">Sarcolemma</location>
        <topology evidence="1">Multi-pass membrane protein</topology>
    </subcellularLocation>
</comment>
<comment type="tissue specificity">
    <text evidence="3">Skeletal muscle.</text>
</comment>
<comment type="PTM">
    <text evidence="1">N-glycosylated.</text>
</comment>
<comment type="similarity">
    <text evidence="6">Belongs to the PMP-22/EMP/MP20 family. CACNG subfamily.</text>
</comment>